<dbReference type="EC" id="6.5.1.8" evidence="1"/>
<dbReference type="EMBL" id="AE017199">
    <property type="protein sequence ID" value="AAR38934.1"/>
    <property type="molecule type" value="Genomic_DNA"/>
</dbReference>
<dbReference type="SMR" id="Q74MJ0"/>
<dbReference type="STRING" id="228908.NEQ078"/>
<dbReference type="EnsemblBacteria" id="AAR38934">
    <property type="protein sequence ID" value="AAR38934"/>
    <property type="gene ID" value="NEQ078"/>
</dbReference>
<dbReference type="KEGG" id="neq:NEQ078"/>
<dbReference type="PATRIC" id="fig|228908.8.peg.81"/>
<dbReference type="HOGENOM" id="CLU_022279_0_1_2"/>
<dbReference type="Proteomes" id="UP000000578">
    <property type="component" value="Chromosome"/>
</dbReference>
<dbReference type="GO" id="GO:0005525">
    <property type="term" value="F:GTP binding"/>
    <property type="evidence" value="ECO:0007669"/>
    <property type="project" value="UniProtKB-KW"/>
</dbReference>
<dbReference type="GO" id="GO:0046872">
    <property type="term" value="F:metal ion binding"/>
    <property type="evidence" value="ECO:0007669"/>
    <property type="project" value="UniProtKB-KW"/>
</dbReference>
<dbReference type="GO" id="GO:0003972">
    <property type="term" value="F:RNA ligase (ATP) activity"/>
    <property type="evidence" value="ECO:0007669"/>
    <property type="project" value="TreeGrafter"/>
</dbReference>
<dbReference type="GO" id="GO:0170057">
    <property type="term" value="F:RNA ligase (GTP) activity"/>
    <property type="evidence" value="ECO:0007669"/>
    <property type="project" value="UniProtKB-EC"/>
</dbReference>
<dbReference type="GO" id="GO:0008033">
    <property type="term" value="P:tRNA processing"/>
    <property type="evidence" value="ECO:0007669"/>
    <property type="project" value="UniProtKB-KW"/>
</dbReference>
<dbReference type="FunFam" id="3.90.1860.10:FF:000001">
    <property type="entry name" value="tRNA-splicing ligase RtcB homolog"/>
    <property type="match status" value="1"/>
</dbReference>
<dbReference type="Gene3D" id="3.90.1860.10">
    <property type="entry name" value="tRNA-splicing ligase RtcB"/>
    <property type="match status" value="1"/>
</dbReference>
<dbReference type="InterPro" id="IPR001233">
    <property type="entry name" value="RtcB"/>
</dbReference>
<dbReference type="InterPro" id="IPR036025">
    <property type="entry name" value="RtcB-like_sf"/>
</dbReference>
<dbReference type="PANTHER" id="PTHR11118">
    <property type="entry name" value="RNA-SPLICING LIGASE RTCB HOMOLOG"/>
    <property type="match status" value="1"/>
</dbReference>
<dbReference type="PANTHER" id="PTHR11118:SF1">
    <property type="entry name" value="RNA-SPLICING LIGASE RTCB HOMOLOG"/>
    <property type="match status" value="1"/>
</dbReference>
<dbReference type="Pfam" id="PF01139">
    <property type="entry name" value="RtcB"/>
    <property type="match status" value="1"/>
</dbReference>
<dbReference type="SUPFAM" id="SSF103365">
    <property type="entry name" value="Hypothetical protein PH1602"/>
    <property type="match status" value="1"/>
</dbReference>
<gene>
    <name type="primary">rtcB</name>
    <name type="ordered locus">NEQ078</name>
</gene>
<reference key="1">
    <citation type="journal article" date="2003" name="Proc. Natl. Acad. Sci. U.S.A.">
        <title>The genome of Nanoarchaeum equitans: insights into early archaeal evolution and derived parasitism.</title>
        <authorList>
            <person name="Waters E."/>
            <person name="Hohn M.J."/>
            <person name="Ahel I."/>
            <person name="Graham D.E."/>
            <person name="Adams M.D."/>
            <person name="Barnstead M."/>
            <person name="Beeson K.Y."/>
            <person name="Bibbs L."/>
            <person name="Bolanos R."/>
            <person name="Keller M."/>
            <person name="Kretz K."/>
            <person name="Lin X."/>
            <person name="Mathur E."/>
            <person name="Ni J."/>
            <person name="Podar M."/>
            <person name="Richardson T."/>
            <person name="Sutton G.G."/>
            <person name="Simon M."/>
            <person name="Soell D."/>
            <person name="Stetter K.O."/>
            <person name="Short J.M."/>
            <person name="Noorderwier M."/>
        </authorList>
    </citation>
    <scope>NUCLEOTIDE SEQUENCE [LARGE SCALE GENOMIC DNA]</scope>
    <source>
        <strain>Kin4-M</strain>
    </source>
</reference>
<name>RTCB_NANEQ</name>
<proteinExistence type="inferred from homology"/>
<protein>
    <recommendedName>
        <fullName evidence="1">tRNA-splicing ligase RtcB</fullName>
        <ecNumber evidence="1">6.5.1.8</ecNumber>
    </recommendedName>
    <alternativeName>
        <fullName evidence="1">3'-phosphate/5'-hydroxy nucleic acid ligase</fullName>
    </alternativeName>
</protein>
<evidence type="ECO:0000250" key="1">
    <source>
        <dbReference type="UniProtKB" id="O59245"/>
    </source>
</evidence>
<evidence type="ECO:0000305" key="2"/>
<sequence>MDIKLRKIDKYIWEIPKEGKMNVPVRIYASDKLIEKMKEDRTLIQARNVSMLPKIVKHMVVMPDGHEGYGPPIGGVGAFSLDNPPVIPGFVGFDINCGVRLLRTNLTIDEIKDRLNLLVNEIFRNVPAGVGEGGKLKLSIDELNKVLDYGVNWAIDNGFGWEEDRNRIESHGYLDFADSDAVSNTAKQRGKDQLGTIGSGNHFLEIQVVDQIYDEEIAKAFGIYEKNQVTVLIHTGSRGLGHQVASDYLRLFEKKYKYDVPDRELIYAPYDSKDAQNYLKAMAAAANFAWANRQLITYWVRKSFEKVLRKNIESIGLEIVYDLAHNIAKFEEHTIDGKKQKLIVYRKGATRAFPPGHKELWGEYKKYGQPVIIPGSMGTASYLLVGQPKAMELSFGSSAHGAGRQLSRVKAKKLYSYSEVIRKLREMGIIVKSTTKTGVLEEIPEAYKDIDEVVRVTHELGISKIVARFRPVAVIKG</sequence>
<keyword id="KW-0342">GTP-binding</keyword>
<keyword id="KW-0436">Ligase</keyword>
<keyword id="KW-0464">Manganese</keyword>
<keyword id="KW-0479">Metal-binding</keyword>
<keyword id="KW-0547">Nucleotide-binding</keyword>
<keyword id="KW-1185">Reference proteome</keyword>
<keyword id="KW-0819">tRNA processing</keyword>
<feature type="chain" id="PRO_0000232542" description="tRNA-splicing ligase RtcB">
    <location>
        <begin position="1"/>
        <end position="477"/>
    </location>
</feature>
<feature type="active site" description="GMP-histidine intermediate" evidence="1">
    <location>
        <position position="400"/>
    </location>
</feature>
<feature type="binding site" evidence="1">
    <location>
        <position position="94"/>
    </location>
    <ligand>
        <name>Mn(2+)</name>
        <dbReference type="ChEBI" id="CHEBI:29035"/>
        <label>1</label>
    </ligand>
</feature>
<feature type="binding site" evidence="1">
    <location>
        <position position="97"/>
    </location>
    <ligand>
        <name>Mn(2+)</name>
        <dbReference type="ChEBI" id="CHEBI:29035"/>
        <label>1</label>
    </ligand>
</feature>
<feature type="binding site" evidence="1">
    <location>
        <position position="97"/>
    </location>
    <ligand>
        <name>Mn(2+)</name>
        <dbReference type="ChEBI" id="CHEBI:29035"/>
        <label>2</label>
    </ligand>
</feature>
<feature type="binding site" evidence="1">
    <location>
        <begin position="201"/>
        <end position="205"/>
    </location>
    <ligand>
        <name>GMP</name>
        <dbReference type="ChEBI" id="CHEBI:58115"/>
    </ligand>
</feature>
<feature type="binding site" evidence="1">
    <location>
        <position position="202"/>
    </location>
    <ligand>
        <name>Mn(2+)</name>
        <dbReference type="ChEBI" id="CHEBI:29035"/>
        <label>1</label>
    </ligand>
</feature>
<feature type="binding site" evidence="1">
    <location>
        <position position="234"/>
    </location>
    <ligand>
        <name>Mn(2+)</name>
        <dbReference type="ChEBI" id="CHEBI:29035"/>
        <label>2</label>
    </ligand>
</feature>
<feature type="binding site" evidence="1">
    <location>
        <begin position="325"/>
        <end position="326"/>
    </location>
    <ligand>
        <name>GMP</name>
        <dbReference type="ChEBI" id="CHEBI:58115"/>
    </ligand>
</feature>
<feature type="binding site" evidence="1">
    <location>
        <position position="325"/>
    </location>
    <ligand>
        <name>Mn(2+)</name>
        <dbReference type="ChEBI" id="CHEBI:29035"/>
        <label>2</label>
    </ligand>
</feature>
<feature type="binding site" evidence="1">
    <location>
        <begin position="374"/>
        <end position="377"/>
    </location>
    <ligand>
        <name>GMP</name>
        <dbReference type="ChEBI" id="CHEBI:58115"/>
    </ligand>
</feature>
<feature type="binding site" evidence="1">
    <location>
        <position position="381"/>
    </location>
    <ligand>
        <name>GMP</name>
        <dbReference type="ChEBI" id="CHEBI:58115"/>
    </ligand>
</feature>
<feature type="binding site" evidence="1">
    <location>
        <begin position="400"/>
        <end position="403"/>
    </location>
    <ligand>
        <name>GMP</name>
        <dbReference type="ChEBI" id="CHEBI:58115"/>
    </ligand>
</feature>
<feature type="binding site" evidence="1">
    <location>
        <position position="476"/>
    </location>
    <ligand>
        <name>GMP</name>
        <dbReference type="ChEBI" id="CHEBI:58115"/>
    </ligand>
</feature>
<organism>
    <name type="scientific">Nanoarchaeum equitans (strain Kin4-M)</name>
    <dbReference type="NCBI Taxonomy" id="228908"/>
    <lineage>
        <taxon>Archaea</taxon>
        <taxon>Nanobdellota</taxon>
        <taxon>Candidatus Nanoarchaeia</taxon>
        <taxon>Nanoarchaeales</taxon>
        <taxon>Nanoarchaeaceae</taxon>
        <taxon>Nanoarchaeum</taxon>
    </lineage>
</organism>
<accession>Q74MJ0</accession>
<comment type="function">
    <text evidence="1">Essential for tRNA splicing and maturation. Acts by directly joining spliced tRNA halves to mature-sized tRNAs. Joins RNA with 2',3'-cyclic-phosphate or 3'-phosphate ends to RNA with 5'-hydroxy ends.</text>
</comment>
<comment type="catalytic activity">
    <reaction evidence="1">
        <text>a 3'-end 3'-phospho-ribonucleotide-RNA + a 5'-end dephospho-ribonucleoside-RNA + GTP = a ribonucleotidyl-ribonucleotide-RNA + GMP + diphosphate</text>
        <dbReference type="Rhea" id="RHEA:68076"/>
        <dbReference type="Rhea" id="RHEA-COMP:10463"/>
        <dbReference type="Rhea" id="RHEA-COMP:13936"/>
        <dbReference type="Rhea" id="RHEA-COMP:17355"/>
        <dbReference type="ChEBI" id="CHEBI:33019"/>
        <dbReference type="ChEBI" id="CHEBI:37565"/>
        <dbReference type="ChEBI" id="CHEBI:58115"/>
        <dbReference type="ChEBI" id="CHEBI:83062"/>
        <dbReference type="ChEBI" id="CHEBI:138284"/>
        <dbReference type="ChEBI" id="CHEBI:173118"/>
        <dbReference type="EC" id="6.5.1.8"/>
    </reaction>
</comment>
<comment type="catalytic activity">
    <reaction evidence="1">
        <text>a 3'-end 2',3'-cyclophospho-ribonucleotide-RNA + a 5'-end dephospho-ribonucleoside-RNA + GTP + H2O = a ribonucleotidyl-ribonucleotide-RNA + GMP + diphosphate + H(+)</text>
        <dbReference type="Rhea" id="RHEA:68080"/>
        <dbReference type="Rhea" id="RHEA-COMP:10464"/>
        <dbReference type="Rhea" id="RHEA-COMP:13936"/>
        <dbReference type="Rhea" id="RHEA-COMP:17355"/>
        <dbReference type="ChEBI" id="CHEBI:15377"/>
        <dbReference type="ChEBI" id="CHEBI:15378"/>
        <dbReference type="ChEBI" id="CHEBI:33019"/>
        <dbReference type="ChEBI" id="CHEBI:37565"/>
        <dbReference type="ChEBI" id="CHEBI:58115"/>
        <dbReference type="ChEBI" id="CHEBI:83064"/>
        <dbReference type="ChEBI" id="CHEBI:138284"/>
        <dbReference type="ChEBI" id="CHEBI:173118"/>
        <dbReference type="EC" id="6.5.1.8"/>
    </reaction>
</comment>
<comment type="cofactor">
    <cofactor evidence="1">
        <name>Mn(2+)</name>
        <dbReference type="ChEBI" id="CHEBI:29035"/>
    </cofactor>
    <text evidence="1">Binds 2 manganese ions per subunit.</text>
</comment>
<comment type="subunit">
    <text evidence="1">Monomer.</text>
</comment>
<comment type="miscellaneous">
    <text evidence="1">Ligation proceeds through 3 nucleotidyl transfer steps, with 2',3'-cyclic phosphate termini being hydrolyzed to 3'-P termini in a step that precedes 3'-P activation with GMP. In the first nucleotidyl transfer step, RtcB reacts with GTP to form a covalent RtcB-histidine-GMP intermediate with release of PPi; in the second step, the GMP moiety is transferred to the RNA 3'-P; in the third step, the 5'-OH from the opposite RNA strand attacks the activated 3'-P to form a 3',5'-phosphodiester bond and release GMP.</text>
</comment>
<comment type="similarity">
    <text evidence="2">Belongs to the RtcB family.</text>
</comment>